<keyword id="KW-0903">Direct protein sequencing</keyword>
<keyword id="KW-0479">Metal-binding</keyword>
<keyword id="KW-0520">NAD</keyword>
<keyword id="KW-0521">NADP</keyword>
<keyword id="KW-0558">Oxidation</keyword>
<keyword id="KW-0560">Oxidoreductase</keyword>
<keyword id="KW-0630">Potassium</keyword>
<keyword id="KW-1185">Reference proteome</keyword>
<keyword id="KW-0346">Stress response</keyword>
<name>BETB_ECOLI</name>
<proteinExistence type="evidence at protein level"/>
<protein>
    <recommendedName>
        <fullName evidence="1">Betaine aldehyde dehydrogenase</fullName>
        <shortName evidence="1">BADH</shortName>
        <ecNumber evidence="1">1.2.1.8</ecNumber>
    </recommendedName>
</protein>
<feature type="initiator methionine" description="Removed" evidence="2">
    <location>
        <position position="1"/>
    </location>
</feature>
<feature type="chain" id="PRO_0000056541" description="Betaine aldehyde dehydrogenase">
    <location>
        <begin position="2"/>
        <end position="490"/>
    </location>
</feature>
<feature type="active site" description="Charge relay system" evidence="1">
    <location>
        <position position="162"/>
    </location>
</feature>
<feature type="active site" description="Proton acceptor" evidence="1">
    <location>
        <position position="252"/>
    </location>
</feature>
<feature type="active site" description="Nucleophile" evidence="1">
    <location>
        <position position="286"/>
    </location>
</feature>
<feature type="active site" description="Charge relay system" evidence="1">
    <location>
        <position position="464"/>
    </location>
</feature>
<feature type="binding site" evidence="1">
    <location>
        <position position="26"/>
    </location>
    <ligand>
        <name>K(+)</name>
        <dbReference type="ChEBI" id="CHEBI:29103"/>
        <label>1</label>
    </ligand>
</feature>
<feature type="binding site" evidence="1">
    <location>
        <position position="27"/>
    </location>
    <ligand>
        <name>K(+)</name>
        <dbReference type="ChEBI" id="CHEBI:29103"/>
        <label>1</label>
    </ligand>
</feature>
<feature type="binding site" evidence="1">
    <location>
        <position position="93"/>
    </location>
    <ligand>
        <name>K(+)</name>
        <dbReference type="ChEBI" id="CHEBI:29103"/>
        <label>1</label>
    </ligand>
</feature>
<feature type="binding site" evidence="1">
    <location>
        <begin position="150"/>
        <end position="152"/>
    </location>
    <ligand>
        <name>NAD(+)</name>
        <dbReference type="ChEBI" id="CHEBI:57540"/>
    </ligand>
</feature>
<feature type="binding site" evidence="1">
    <location>
        <begin position="176"/>
        <end position="179"/>
    </location>
    <ligand>
        <name>NAD(+)</name>
        <dbReference type="ChEBI" id="CHEBI:57540"/>
    </ligand>
</feature>
<feature type="binding site" evidence="1">
    <location>
        <position position="180"/>
    </location>
    <ligand>
        <name>K(+)</name>
        <dbReference type="ChEBI" id="CHEBI:29103"/>
        <label>1</label>
    </ligand>
</feature>
<feature type="binding site" evidence="1">
    <location>
        <begin position="230"/>
        <end position="233"/>
    </location>
    <ligand>
        <name>NAD(+)</name>
        <dbReference type="ChEBI" id="CHEBI:57540"/>
    </ligand>
</feature>
<feature type="binding site" evidence="1">
    <location>
        <position position="246"/>
    </location>
    <ligand>
        <name>K(+)</name>
        <dbReference type="ChEBI" id="CHEBI:29103"/>
        <label>2</label>
    </ligand>
</feature>
<feature type="binding site" evidence="1">
    <location>
        <position position="254"/>
    </location>
    <ligand>
        <name>NAD(+)</name>
        <dbReference type="ChEBI" id="CHEBI:57540"/>
    </ligand>
</feature>
<feature type="binding site" description="covalent" evidence="1">
    <location>
        <position position="286"/>
    </location>
    <ligand>
        <name>NAD(+)</name>
        <dbReference type="ChEBI" id="CHEBI:57540"/>
    </ligand>
</feature>
<feature type="binding site" evidence="1">
    <location>
        <position position="387"/>
    </location>
    <ligand>
        <name>NAD(+)</name>
        <dbReference type="ChEBI" id="CHEBI:57540"/>
    </ligand>
</feature>
<feature type="binding site" evidence="1">
    <location>
        <position position="457"/>
    </location>
    <ligand>
        <name>K(+)</name>
        <dbReference type="ChEBI" id="CHEBI:29103"/>
        <label>2</label>
    </ligand>
</feature>
<feature type="binding site" evidence="1">
    <location>
        <position position="460"/>
    </location>
    <ligand>
        <name>K(+)</name>
        <dbReference type="ChEBI" id="CHEBI:29103"/>
        <label>2</label>
    </ligand>
</feature>
<feature type="site" description="Seems to be a necessary countercharge to the potassium cations" evidence="1">
    <location>
        <position position="248"/>
    </location>
</feature>
<feature type="modified residue" description="Cysteine sulfenic acid (-SOH)" evidence="1">
    <location>
        <position position="286"/>
    </location>
</feature>
<feature type="sequence conflict" description="In Ref. 2; AAA23506/AAA23505." evidence="6" ref="2">
    <original>A</original>
    <variation>R</variation>
    <location>
        <position position="232"/>
    </location>
</feature>
<feature type="sequence conflict" description="In Ref. 2; AAA23506/AAA23505." evidence="6" ref="2">
    <original>R</original>
    <variation>P</variation>
    <location>
        <position position="312"/>
    </location>
</feature>
<accession>P17445</accession>
<accession>Q2MCB1</accession>
<gene>
    <name evidence="1" type="primary">betB</name>
    <name type="ordered locus">b0312</name>
    <name type="ordered locus">JW0304</name>
</gene>
<reference key="1">
    <citation type="journal article" date="1991" name="Mol. Microbiol.">
        <title>DNA sequence and analysis of the bet genes encoding the osmoregulatory choline-glycine betaine pathway of Escherichia coli.</title>
        <authorList>
            <person name="Lamark T."/>
            <person name="Kaasen E."/>
            <person name="Eshoo M.W."/>
            <person name="Falkenberg P."/>
            <person name="McDougall J."/>
            <person name="Strom A.R."/>
        </authorList>
    </citation>
    <scope>NUCLEOTIDE SEQUENCE [GENOMIC DNA]</scope>
    <scope>PROTEIN SEQUENCE OF 2-29</scope>
    <source>
        <strain>K12</strain>
    </source>
</reference>
<reference key="2">
    <citation type="journal article" date="1991" name="Gene">
        <title>Characterization of an Escherichia coli gene encoding betaine aldehyde dehydrogenase (BADH): structural similarity to mammalian ALDHs and a plant BADH.</title>
        <authorList>
            <person name="Boyd L.A."/>
            <person name="Adam L."/>
            <person name="Pelcher L.E."/>
            <person name="McHughen A."/>
            <person name="Hirji R."/>
            <person name="Selvaraj G."/>
        </authorList>
    </citation>
    <scope>NUCLEOTIDE SEQUENCE [GENOMIC DNA]</scope>
</reference>
<reference key="3">
    <citation type="submission" date="1997-01" db="EMBL/GenBank/DDBJ databases">
        <title>Sequence of minutes 4-25 of Escherichia coli.</title>
        <authorList>
            <person name="Chung E."/>
            <person name="Allen E."/>
            <person name="Araujo R."/>
            <person name="Aparicio A.M."/>
            <person name="Davis K."/>
            <person name="Duncan M."/>
            <person name="Federspiel N."/>
            <person name="Hyman R."/>
            <person name="Kalman S."/>
            <person name="Komp C."/>
            <person name="Kurdi O."/>
            <person name="Lew H."/>
            <person name="Lin D."/>
            <person name="Namath A."/>
            <person name="Oefner P."/>
            <person name="Roberts D."/>
            <person name="Schramm S."/>
            <person name="Davis R.W."/>
        </authorList>
    </citation>
    <scope>NUCLEOTIDE SEQUENCE [LARGE SCALE GENOMIC DNA]</scope>
    <source>
        <strain>K12 / MG1655 / ATCC 47076</strain>
    </source>
</reference>
<reference key="4">
    <citation type="journal article" date="1997" name="Science">
        <title>The complete genome sequence of Escherichia coli K-12.</title>
        <authorList>
            <person name="Blattner F.R."/>
            <person name="Plunkett G. III"/>
            <person name="Bloch C.A."/>
            <person name="Perna N.T."/>
            <person name="Burland V."/>
            <person name="Riley M."/>
            <person name="Collado-Vides J."/>
            <person name="Glasner J.D."/>
            <person name="Rode C.K."/>
            <person name="Mayhew G.F."/>
            <person name="Gregor J."/>
            <person name="Davis N.W."/>
            <person name="Kirkpatrick H.A."/>
            <person name="Goeden M.A."/>
            <person name="Rose D.J."/>
            <person name="Mau B."/>
            <person name="Shao Y."/>
        </authorList>
    </citation>
    <scope>NUCLEOTIDE SEQUENCE [LARGE SCALE GENOMIC DNA]</scope>
    <source>
        <strain>K12 / MG1655 / ATCC 47076</strain>
    </source>
</reference>
<reference key="5">
    <citation type="journal article" date="2006" name="Mol. Syst. Biol.">
        <title>Highly accurate genome sequences of Escherichia coli K-12 strains MG1655 and W3110.</title>
        <authorList>
            <person name="Hayashi K."/>
            <person name="Morooka N."/>
            <person name="Yamamoto Y."/>
            <person name="Fujita K."/>
            <person name="Isono K."/>
            <person name="Choi S."/>
            <person name="Ohtsubo E."/>
            <person name="Baba T."/>
            <person name="Wanner B.L."/>
            <person name="Mori H."/>
            <person name="Horiuchi T."/>
        </authorList>
    </citation>
    <scope>NUCLEOTIDE SEQUENCE [LARGE SCALE GENOMIC DNA]</scope>
    <source>
        <strain>K12 / W3110 / ATCC 27325 / DSM 5911</strain>
    </source>
</reference>
<reference key="6">
    <citation type="journal article" date="1986" name="J. Bacteriol.">
        <title>Choline-glycine betaine pathway confers a high level of osmotic tolerance in Escherichia coli.</title>
        <authorList>
            <person name="Landfald B."/>
            <person name="Strom A.R."/>
        </authorList>
    </citation>
    <scope>FUNCTION</scope>
    <scope>CATALYTIC ACTIVITY</scope>
    <scope>BIOPHYSICOCHEMICAL PROPERTIES</scope>
    <scope>INDUCTION</scope>
</reference>
<reference key="7">
    <citation type="journal article" date="1990" name="Biochim. Biophys. Acta">
        <title>Purification and characterization of osmoregulatory betaine aldehyde dehydrogenase of Escherichia coli.</title>
        <authorList>
            <person name="Falkenberg P."/>
            <person name="Strom A.R."/>
        </authorList>
    </citation>
    <scope>FUNCTION</scope>
    <scope>CATALYTIC ACTIVITY</scope>
    <scope>BIOPHYSICOCHEMICAL PROPERTIES</scope>
    <scope>ACTIVITY REGULATION</scope>
    <scope>SUBSTRATE SPECIFICITY</scope>
    <scope>SUBUNIT</scope>
</reference>
<reference key="8">
    <citation type="journal article" date="1996" name="J. Bacteriol.">
        <title>The complex bet promoters of Escherichia coli: regulation by oxygen (ArcA), choline (BetI), and osmotic stress.</title>
        <authorList>
            <person name="Lamark T."/>
            <person name="Rokenes T.P."/>
            <person name="McDougall J."/>
            <person name="Strom A.R."/>
        </authorList>
    </citation>
    <scope>INDUCTION</scope>
</reference>
<sequence>MSRMAEQQLYIHGGYTSATSGRTFETINPANGNVLATVQAAGREDVDRAVKSAQQGQKIWASMTAMERSRILRRAVDILRERNDELAKLETLDTGKAYSETSTVDIVTGADVLEYYAGLIPALEGSQIPLRETSFVYTRREPLGVVAGIGAWNYPIQIALWKSAPALAAGNAMIFKPSEVTPLTALKLAEIYSEAGLPDGVFNVLPGVGAETGQYLTEHPGIAKVSFTGGVASGKKVMANSAASSLKEVTMELGGKSPLIVFDDADLDLAADIAMMANFFSSGQVCTNGTRVFVPAKCKAAFEQKILARVERIRAGDVFDPQTNFGPLVSFPHRDNVLRYIAKGKEEGARVLCGGDVLKGDGFDNGAWVAPTVFTDCSDDMTIVREEIFGPVMSILTYESEDEVIRRANDTDYGLAAGIVTADLNRAHRVIHQLEAGICWINTWGESPAEMPVGGYKHSGIGRENGVMTLQSYTQVKSIQVEMAKFQSIF</sequence>
<dbReference type="EC" id="1.2.1.8" evidence="1"/>
<dbReference type="EMBL" id="X52905">
    <property type="protein sequence ID" value="CAA37092.1"/>
    <property type="molecule type" value="Genomic_DNA"/>
</dbReference>
<dbReference type="EMBL" id="M77739">
    <property type="protein sequence ID" value="AAA23506.1"/>
    <property type="molecule type" value="Genomic_DNA"/>
</dbReference>
<dbReference type="EMBL" id="M77739">
    <property type="protein sequence ID" value="AAA23505.1"/>
    <property type="status" value="ALT_INIT"/>
    <property type="molecule type" value="Genomic_DNA"/>
</dbReference>
<dbReference type="EMBL" id="U73857">
    <property type="protein sequence ID" value="AAB18038.1"/>
    <property type="status" value="ALT_INIT"/>
    <property type="molecule type" value="Genomic_DNA"/>
</dbReference>
<dbReference type="EMBL" id="U00096">
    <property type="protein sequence ID" value="AAC73415.1"/>
    <property type="molecule type" value="Genomic_DNA"/>
</dbReference>
<dbReference type="EMBL" id="AP009048">
    <property type="protein sequence ID" value="BAE76095.1"/>
    <property type="molecule type" value="Genomic_DNA"/>
</dbReference>
<dbReference type="PIR" id="S15181">
    <property type="entry name" value="S15181"/>
</dbReference>
<dbReference type="RefSeq" id="NP_414846.1">
    <property type="nucleotide sequence ID" value="NC_000913.3"/>
</dbReference>
<dbReference type="RefSeq" id="WP_000089110.1">
    <property type="nucleotide sequence ID" value="NZ_SSZK01000067.1"/>
</dbReference>
<dbReference type="SMR" id="P17445"/>
<dbReference type="BioGRID" id="4262801">
    <property type="interactions" value="15"/>
</dbReference>
<dbReference type="DIP" id="DIP-9208N"/>
<dbReference type="FunCoup" id="P17445">
    <property type="interactions" value="479"/>
</dbReference>
<dbReference type="IntAct" id="P17445">
    <property type="interactions" value="7"/>
</dbReference>
<dbReference type="STRING" id="511145.b0312"/>
<dbReference type="jPOST" id="P17445"/>
<dbReference type="PaxDb" id="511145-b0312"/>
<dbReference type="EnsemblBacteria" id="AAC73415">
    <property type="protein sequence ID" value="AAC73415"/>
    <property type="gene ID" value="b0312"/>
</dbReference>
<dbReference type="GeneID" id="947376"/>
<dbReference type="KEGG" id="ecj:JW0304"/>
<dbReference type="KEGG" id="eco:b0312"/>
<dbReference type="KEGG" id="ecoc:C3026_01525"/>
<dbReference type="KEGG" id="ecoc:C3026_24700"/>
<dbReference type="PATRIC" id="fig|1411691.4.peg.1965"/>
<dbReference type="EchoBASE" id="EB0108"/>
<dbReference type="eggNOG" id="COG1012">
    <property type="taxonomic scope" value="Bacteria"/>
</dbReference>
<dbReference type="HOGENOM" id="CLU_005391_0_0_6"/>
<dbReference type="InParanoid" id="P17445"/>
<dbReference type="OMA" id="CREGIRM"/>
<dbReference type="OrthoDB" id="9812625at2"/>
<dbReference type="PhylomeDB" id="P17445"/>
<dbReference type="BioCyc" id="EcoCyc:BADH-MONOMER"/>
<dbReference type="BioCyc" id="MetaCyc:BADH-MONOMER"/>
<dbReference type="UniPathway" id="UPA00529">
    <property type="reaction ID" value="UER00386"/>
</dbReference>
<dbReference type="PRO" id="PR:P17445"/>
<dbReference type="Proteomes" id="UP000000625">
    <property type="component" value="Chromosome"/>
</dbReference>
<dbReference type="GO" id="GO:0005829">
    <property type="term" value="C:cytosol"/>
    <property type="evidence" value="ECO:0000314"/>
    <property type="project" value="EcoCyc"/>
</dbReference>
<dbReference type="GO" id="GO:0032991">
    <property type="term" value="C:protein-containing complex"/>
    <property type="evidence" value="ECO:0000314"/>
    <property type="project" value="EcoCyc"/>
</dbReference>
<dbReference type="GO" id="GO:0008802">
    <property type="term" value="F:betaine-aldehyde dehydrogenase (NAD+) activity"/>
    <property type="evidence" value="ECO:0000314"/>
    <property type="project" value="EcoCyc"/>
</dbReference>
<dbReference type="GO" id="GO:0042802">
    <property type="term" value="F:identical protein binding"/>
    <property type="evidence" value="ECO:0000314"/>
    <property type="project" value="EcoCyc"/>
</dbReference>
<dbReference type="GO" id="GO:0046872">
    <property type="term" value="F:metal ion binding"/>
    <property type="evidence" value="ECO:0007669"/>
    <property type="project" value="UniProtKB-KW"/>
</dbReference>
<dbReference type="GO" id="GO:0019285">
    <property type="term" value="P:glycine betaine biosynthetic process from choline"/>
    <property type="evidence" value="ECO:0000314"/>
    <property type="project" value="EcoCyc"/>
</dbReference>
<dbReference type="GO" id="GO:0051289">
    <property type="term" value="P:protein homotetramerization"/>
    <property type="evidence" value="ECO:0000314"/>
    <property type="project" value="EcoCyc"/>
</dbReference>
<dbReference type="GO" id="GO:0006970">
    <property type="term" value="P:response to osmotic stress"/>
    <property type="evidence" value="ECO:0000270"/>
    <property type="project" value="EcoCyc"/>
</dbReference>
<dbReference type="GO" id="GO:0010165">
    <property type="term" value="P:response to X-ray"/>
    <property type="evidence" value="ECO:0000315"/>
    <property type="project" value="EcoCyc"/>
</dbReference>
<dbReference type="CDD" id="cd07090">
    <property type="entry name" value="ALDH_F9_TMBADH"/>
    <property type="match status" value="1"/>
</dbReference>
<dbReference type="FunFam" id="3.40.309.10:FF:000014">
    <property type="entry name" value="NAD/NADP-dependent betaine aldehyde dehydrogenase"/>
    <property type="match status" value="1"/>
</dbReference>
<dbReference type="FunFam" id="3.40.605.10:FF:000007">
    <property type="entry name" value="NAD/NADP-dependent betaine aldehyde dehydrogenase"/>
    <property type="match status" value="1"/>
</dbReference>
<dbReference type="Gene3D" id="3.40.605.10">
    <property type="entry name" value="Aldehyde Dehydrogenase, Chain A, domain 1"/>
    <property type="match status" value="1"/>
</dbReference>
<dbReference type="Gene3D" id="3.40.309.10">
    <property type="entry name" value="Aldehyde Dehydrogenase, Chain A, domain 2"/>
    <property type="match status" value="1"/>
</dbReference>
<dbReference type="HAMAP" id="MF_00804">
    <property type="entry name" value="BADH"/>
    <property type="match status" value="1"/>
</dbReference>
<dbReference type="InterPro" id="IPR016161">
    <property type="entry name" value="Ald_DH/histidinol_DH"/>
</dbReference>
<dbReference type="InterPro" id="IPR016163">
    <property type="entry name" value="Ald_DH_C"/>
</dbReference>
<dbReference type="InterPro" id="IPR016160">
    <property type="entry name" value="Ald_DH_CS_CYS"/>
</dbReference>
<dbReference type="InterPro" id="IPR029510">
    <property type="entry name" value="Ald_DH_CS_GLU"/>
</dbReference>
<dbReference type="InterPro" id="IPR016162">
    <property type="entry name" value="Ald_DH_N"/>
</dbReference>
<dbReference type="InterPro" id="IPR015590">
    <property type="entry name" value="Aldehyde_DH_dom"/>
</dbReference>
<dbReference type="InterPro" id="IPR011264">
    <property type="entry name" value="BADH"/>
</dbReference>
<dbReference type="NCBIfam" id="TIGR01804">
    <property type="entry name" value="BADH"/>
    <property type="match status" value="1"/>
</dbReference>
<dbReference type="NCBIfam" id="NF009725">
    <property type="entry name" value="PRK13252.1"/>
    <property type="match status" value="1"/>
</dbReference>
<dbReference type="PANTHER" id="PTHR11699">
    <property type="entry name" value="ALDEHYDE DEHYDROGENASE-RELATED"/>
    <property type="match status" value="1"/>
</dbReference>
<dbReference type="Pfam" id="PF00171">
    <property type="entry name" value="Aldedh"/>
    <property type="match status" value="1"/>
</dbReference>
<dbReference type="SUPFAM" id="SSF53720">
    <property type="entry name" value="ALDH-like"/>
    <property type="match status" value="1"/>
</dbReference>
<dbReference type="PROSITE" id="PS00070">
    <property type="entry name" value="ALDEHYDE_DEHYDR_CYS"/>
    <property type="match status" value="1"/>
</dbReference>
<dbReference type="PROSITE" id="PS00687">
    <property type="entry name" value="ALDEHYDE_DEHYDR_GLU"/>
    <property type="match status" value="1"/>
</dbReference>
<comment type="function">
    <text evidence="1 3 4">Involved in the biosynthesis of the osmoprotectant glycine betaine. Catalyzes the irreversible oxidation of betaine aldehyde to the corresponding acid. It is highly specific for betaine and has a significantly higher affinity for NAD than for NADP.</text>
</comment>
<comment type="catalytic activity">
    <reaction evidence="1 3 4">
        <text>betaine aldehyde + NAD(+) + H2O = glycine betaine + NADH + 2 H(+)</text>
        <dbReference type="Rhea" id="RHEA:15305"/>
        <dbReference type="ChEBI" id="CHEBI:15377"/>
        <dbReference type="ChEBI" id="CHEBI:15378"/>
        <dbReference type="ChEBI" id="CHEBI:15710"/>
        <dbReference type="ChEBI" id="CHEBI:17750"/>
        <dbReference type="ChEBI" id="CHEBI:57540"/>
        <dbReference type="ChEBI" id="CHEBI:57945"/>
        <dbReference type="EC" id="1.2.1.8"/>
    </reaction>
    <physiologicalReaction direction="left-to-right" evidence="3">
        <dbReference type="Rhea" id="RHEA:15306"/>
    </physiologicalReaction>
</comment>
<comment type="catalytic activity">
    <reaction evidence="3 4">
        <text>betaine aldehyde + NADP(+) + H2O = glycine betaine + NADPH + 2 H(+)</text>
        <dbReference type="Rhea" id="RHEA:30067"/>
        <dbReference type="ChEBI" id="CHEBI:15377"/>
        <dbReference type="ChEBI" id="CHEBI:15378"/>
        <dbReference type="ChEBI" id="CHEBI:15710"/>
        <dbReference type="ChEBI" id="CHEBI:17750"/>
        <dbReference type="ChEBI" id="CHEBI:57783"/>
        <dbReference type="ChEBI" id="CHEBI:58349"/>
    </reaction>
    <physiologicalReaction direction="left-to-right" evidence="7">
        <dbReference type="Rhea" id="RHEA:30068"/>
    </physiologicalReaction>
</comment>
<comment type="cofactor">
    <cofactor evidence="1">
        <name>K(+)</name>
        <dbReference type="ChEBI" id="CHEBI:29103"/>
    </cofactor>
    <text evidence="1">Binds 2 potassium ions per subunit.</text>
</comment>
<comment type="activity regulation">
    <text evidence="3">Aldehydes with apolar groups are the most effective inhibitors. N-Methylated compounds are also inhibitory, but to a much lesser degree than the aldehydes. The alcohols are more inhibitory than the corresponding acids, and the inhibitory effect increases with the degree of methylation from ethanolamine to choline.</text>
</comment>
<comment type="biophysicochemical properties">
    <kinetics>
        <KM evidence="3">99 uM for NAD (at pH 7.5 and 25 degrees Celsius)</KM>
        <KM evidence="3">160 uM for betaine aldehyde (at pH 7.5 and 25 degrees Celsius)</KM>
        <KM evidence="3">400 uM for NADP (at pH 7.5 and 25 degrees Celsius)</KM>
        <KM evidence="4">60 uM for NAD (at pH 7.5 and 37 degrees Celsius)</KM>
        <KM evidence="4">130 uM for betaine aldehyde (at pH 7.5 and 37 degrees Celsius)</KM>
        <KM evidence="4">500 uM for NADP (at pH 7.5 and 37 degrees Celsius)</KM>
        <Vmax evidence="3">66.0 umol/min/mg enzyme for the NAD-dependent oxidation of betaine aldehyde (at pH 7.5 and 25 degrees Celsius)</Vmax>
        <Vmax evidence="3">30.0 umol/min/mg enzyme for the NADP-dependent oxidation of betaine aldehyde (at pH 7.5 and 25 degrees Celsius)</Vmax>
    </kinetics>
    <phDependence>
        <text evidence="3 4">Optimum pH is between 7.5 and 9.5.</text>
    </phDependence>
</comment>
<comment type="pathway">
    <text evidence="1">Amine and polyamine biosynthesis; betaine biosynthesis via choline pathway; betaine from betaine aldehyde: step 1/1.</text>
</comment>
<comment type="subunit">
    <text evidence="7">Dimer of dimers.</text>
</comment>
<comment type="induction">
    <text evidence="4 5">By osmotic stress. Choline is required for full expression. Oxygen and choline exert their control via the transacting DNA-binding proteins ArcA and BetI, respectively.</text>
</comment>
<comment type="similarity">
    <text evidence="1">Belongs to the aldehyde dehydrogenase family.</text>
</comment>
<comment type="sequence caution" evidence="6">
    <conflict type="erroneous initiation">
        <sequence resource="EMBL-CDS" id="AAA23505"/>
    </conflict>
    <text>Extended N-terminus.</text>
</comment>
<comment type="sequence caution" evidence="6">
    <conflict type="erroneous initiation">
        <sequence resource="EMBL-CDS" id="AAB18038"/>
    </conflict>
    <text>Extended N-terminus.</text>
</comment>
<evidence type="ECO:0000255" key="1">
    <source>
        <dbReference type="HAMAP-Rule" id="MF_00804"/>
    </source>
</evidence>
<evidence type="ECO:0000269" key="2">
    <source>
    </source>
</evidence>
<evidence type="ECO:0000269" key="3">
    <source>
    </source>
</evidence>
<evidence type="ECO:0000269" key="4">
    <source>
    </source>
</evidence>
<evidence type="ECO:0000269" key="5">
    <source>
    </source>
</evidence>
<evidence type="ECO:0000305" key="6"/>
<evidence type="ECO:0000305" key="7">
    <source>
    </source>
</evidence>
<organism>
    <name type="scientific">Escherichia coli (strain K12)</name>
    <dbReference type="NCBI Taxonomy" id="83333"/>
    <lineage>
        <taxon>Bacteria</taxon>
        <taxon>Pseudomonadati</taxon>
        <taxon>Pseudomonadota</taxon>
        <taxon>Gammaproteobacteria</taxon>
        <taxon>Enterobacterales</taxon>
        <taxon>Enterobacteriaceae</taxon>
        <taxon>Escherichia</taxon>
    </lineage>
</organism>